<sequence length="88" mass="10235">MALLDFFLSRKKNTANIAKERLQIIVAERRRSDAEPHYLPQLRKDILEVICKYVQIDPEMVTVQLEQKDGDISILELNVTLPEAEELK</sequence>
<accession>B7MK71</accession>
<dbReference type="EMBL" id="CU928161">
    <property type="protein sequence ID" value="CAR02563.1"/>
    <property type="molecule type" value="Genomic_DNA"/>
</dbReference>
<dbReference type="RefSeq" id="WP_001185665.1">
    <property type="nucleotide sequence ID" value="NC_011742.1"/>
</dbReference>
<dbReference type="SMR" id="B7MK71"/>
<dbReference type="GeneID" id="93776260"/>
<dbReference type="KEGG" id="ecz:ECS88_1237"/>
<dbReference type="HOGENOM" id="CLU_137929_2_2_6"/>
<dbReference type="Proteomes" id="UP000000747">
    <property type="component" value="Chromosome"/>
</dbReference>
<dbReference type="GO" id="GO:0051301">
    <property type="term" value="P:cell division"/>
    <property type="evidence" value="ECO:0007669"/>
    <property type="project" value="UniProtKB-KW"/>
</dbReference>
<dbReference type="GO" id="GO:0032955">
    <property type="term" value="P:regulation of division septum assembly"/>
    <property type="evidence" value="ECO:0007669"/>
    <property type="project" value="InterPro"/>
</dbReference>
<dbReference type="FunFam" id="3.30.1070.10:FF:000001">
    <property type="entry name" value="Cell division topological specificity factor"/>
    <property type="match status" value="1"/>
</dbReference>
<dbReference type="Gene3D" id="3.30.1070.10">
    <property type="entry name" value="Cell division topological specificity factor MinE"/>
    <property type="match status" value="1"/>
</dbReference>
<dbReference type="HAMAP" id="MF_00262">
    <property type="entry name" value="MinE"/>
    <property type="match status" value="1"/>
</dbReference>
<dbReference type="InterPro" id="IPR005527">
    <property type="entry name" value="MinE"/>
</dbReference>
<dbReference type="InterPro" id="IPR036707">
    <property type="entry name" value="MinE_sf"/>
</dbReference>
<dbReference type="NCBIfam" id="TIGR01215">
    <property type="entry name" value="minE"/>
    <property type="match status" value="1"/>
</dbReference>
<dbReference type="NCBIfam" id="NF001422">
    <property type="entry name" value="PRK00296.1"/>
    <property type="match status" value="1"/>
</dbReference>
<dbReference type="Pfam" id="PF03776">
    <property type="entry name" value="MinE"/>
    <property type="match status" value="1"/>
</dbReference>
<dbReference type="SUPFAM" id="SSF55229">
    <property type="entry name" value="Cell division protein MinE topological specificity domain"/>
    <property type="match status" value="1"/>
</dbReference>
<protein>
    <recommendedName>
        <fullName evidence="1">Cell division topological specificity factor</fullName>
    </recommendedName>
</protein>
<evidence type="ECO:0000255" key="1">
    <source>
        <dbReference type="HAMAP-Rule" id="MF_00262"/>
    </source>
</evidence>
<name>MINE_ECO45</name>
<keyword id="KW-0131">Cell cycle</keyword>
<keyword id="KW-0132">Cell division</keyword>
<keyword id="KW-1185">Reference proteome</keyword>
<proteinExistence type="inferred from homology"/>
<reference key="1">
    <citation type="journal article" date="2009" name="PLoS Genet.">
        <title>Organised genome dynamics in the Escherichia coli species results in highly diverse adaptive paths.</title>
        <authorList>
            <person name="Touchon M."/>
            <person name="Hoede C."/>
            <person name="Tenaillon O."/>
            <person name="Barbe V."/>
            <person name="Baeriswyl S."/>
            <person name="Bidet P."/>
            <person name="Bingen E."/>
            <person name="Bonacorsi S."/>
            <person name="Bouchier C."/>
            <person name="Bouvet O."/>
            <person name="Calteau A."/>
            <person name="Chiapello H."/>
            <person name="Clermont O."/>
            <person name="Cruveiller S."/>
            <person name="Danchin A."/>
            <person name="Diard M."/>
            <person name="Dossat C."/>
            <person name="Karoui M.E."/>
            <person name="Frapy E."/>
            <person name="Garry L."/>
            <person name="Ghigo J.M."/>
            <person name="Gilles A.M."/>
            <person name="Johnson J."/>
            <person name="Le Bouguenec C."/>
            <person name="Lescat M."/>
            <person name="Mangenot S."/>
            <person name="Martinez-Jehanne V."/>
            <person name="Matic I."/>
            <person name="Nassif X."/>
            <person name="Oztas S."/>
            <person name="Petit M.A."/>
            <person name="Pichon C."/>
            <person name="Rouy Z."/>
            <person name="Ruf C.S."/>
            <person name="Schneider D."/>
            <person name="Tourret J."/>
            <person name="Vacherie B."/>
            <person name="Vallenet D."/>
            <person name="Medigue C."/>
            <person name="Rocha E.P.C."/>
            <person name="Denamur E."/>
        </authorList>
    </citation>
    <scope>NUCLEOTIDE SEQUENCE [LARGE SCALE GENOMIC DNA]</scope>
    <source>
        <strain>S88 / ExPEC</strain>
    </source>
</reference>
<organism>
    <name type="scientific">Escherichia coli O45:K1 (strain S88 / ExPEC)</name>
    <dbReference type="NCBI Taxonomy" id="585035"/>
    <lineage>
        <taxon>Bacteria</taxon>
        <taxon>Pseudomonadati</taxon>
        <taxon>Pseudomonadota</taxon>
        <taxon>Gammaproteobacteria</taxon>
        <taxon>Enterobacterales</taxon>
        <taxon>Enterobacteriaceae</taxon>
        <taxon>Escherichia</taxon>
    </lineage>
</organism>
<comment type="function">
    <text evidence="1">Prevents the cell division inhibition by proteins MinC and MinD at internal division sites while permitting inhibition at polar sites. This ensures cell division at the proper site by restricting the formation of a division septum at the midpoint of the long axis of the cell.</text>
</comment>
<comment type="similarity">
    <text evidence="1">Belongs to the MinE family.</text>
</comment>
<gene>
    <name evidence="1" type="primary">minE</name>
    <name type="ordered locus">ECS88_1237</name>
</gene>
<feature type="chain" id="PRO_1000191281" description="Cell division topological specificity factor">
    <location>
        <begin position="1"/>
        <end position="88"/>
    </location>
</feature>